<dbReference type="EC" id="3.4.25.2" evidence="1"/>
<dbReference type="EMBL" id="CP000527">
    <property type="protein sequence ID" value="ABM28573.1"/>
    <property type="molecule type" value="Genomic_DNA"/>
</dbReference>
<dbReference type="RefSeq" id="WP_010938868.1">
    <property type="nucleotide sequence ID" value="NC_008751.1"/>
</dbReference>
<dbReference type="SMR" id="A1VDQ7"/>
<dbReference type="MEROPS" id="T01.007"/>
<dbReference type="KEGG" id="dvl:Dvul_1556"/>
<dbReference type="HOGENOM" id="CLU_093872_1_1_7"/>
<dbReference type="Proteomes" id="UP000009173">
    <property type="component" value="Chromosome"/>
</dbReference>
<dbReference type="GO" id="GO:0009376">
    <property type="term" value="C:HslUV protease complex"/>
    <property type="evidence" value="ECO:0007669"/>
    <property type="project" value="UniProtKB-UniRule"/>
</dbReference>
<dbReference type="GO" id="GO:0005839">
    <property type="term" value="C:proteasome core complex"/>
    <property type="evidence" value="ECO:0007669"/>
    <property type="project" value="InterPro"/>
</dbReference>
<dbReference type="GO" id="GO:0046872">
    <property type="term" value="F:metal ion binding"/>
    <property type="evidence" value="ECO:0007669"/>
    <property type="project" value="UniProtKB-KW"/>
</dbReference>
<dbReference type="GO" id="GO:0004298">
    <property type="term" value="F:threonine-type endopeptidase activity"/>
    <property type="evidence" value="ECO:0007669"/>
    <property type="project" value="UniProtKB-KW"/>
</dbReference>
<dbReference type="GO" id="GO:0051603">
    <property type="term" value="P:proteolysis involved in protein catabolic process"/>
    <property type="evidence" value="ECO:0007669"/>
    <property type="project" value="InterPro"/>
</dbReference>
<dbReference type="CDD" id="cd01913">
    <property type="entry name" value="protease_HslV"/>
    <property type="match status" value="1"/>
</dbReference>
<dbReference type="FunFam" id="3.60.20.10:FF:000002">
    <property type="entry name" value="ATP-dependent protease subunit HslV"/>
    <property type="match status" value="1"/>
</dbReference>
<dbReference type="Gene3D" id="3.60.20.10">
    <property type="entry name" value="Glutamine Phosphoribosylpyrophosphate, subunit 1, domain 1"/>
    <property type="match status" value="1"/>
</dbReference>
<dbReference type="HAMAP" id="MF_00248">
    <property type="entry name" value="HslV"/>
    <property type="match status" value="1"/>
</dbReference>
<dbReference type="InterPro" id="IPR022281">
    <property type="entry name" value="ATP-dep_Prtase_HsIV_su"/>
</dbReference>
<dbReference type="InterPro" id="IPR029055">
    <property type="entry name" value="Ntn_hydrolases_N"/>
</dbReference>
<dbReference type="InterPro" id="IPR001353">
    <property type="entry name" value="Proteasome_sua/b"/>
</dbReference>
<dbReference type="InterPro" id="IPR023333">
    <property type="entry name" value="Proteasome_suB-type"/>
</dbReference>
<dbReference type="NCBIfam" id="TIGR03692">
    <property type="entry name" value="ATP_dep_HslV"/>
    <property type="match status" value="1"/>
</dbReference>
<dbReference type="NCBIfam" id="NF003964">
    <property type="entry name" value="PRK05456.1"/>
    <property type="match status" value="1"/>
</dbReference>
<dbReference type="PANTHER" id="PTHR32194:SF0">
    <property type="entry name" value="ATP-DEPENDENT PROTEASE SUBUNIT HSLV"/>
    <property type="match status" value="1"/>
</dbReference>
<dbReference type="PANTHER" id="PTHR32194">
    <property type="entry name" value="METALLOPROTEASE TLDD"/>
    <property type="match status" value="1"/>
</dbReference>
<dbReference type="Pfam" id="PF00227">
    <property type="entry name" value="Proteasome"/>
    <property type="match status" value="1"/>
</dbReference>
<dbReference type="PIRSF" id="PIRSF039093">
    <property type="entry name" value="HslV"/>
    <property type="match status" value="1"/>
</dbReference>
<dbReference type="SUPFAM" id="SSF56235">
    <property type="entry name" value="N-terminal nucleophile aminohydrolases (Ntn hydrolases)"/>
    <property type="match status" value="1"/>
</dbReference>
<dbReference type="PROSITE" id="PS51476">
    <property type="entry name" value="PROTEASOME_BETA_2"/>
    <property type="match status" value="1"/>
</dbReference>
<evidence type="ECO:0000255" key="1">
    <source>
        <dbReference type="HAMAP-Rule" id="MF_00248"/>
    </source>
</evidence>
<protein>
    <recommendedName>
        <fullName evidence="1">ATP-dependent protease subunit HslV</fullName>
        <ecNumber evidence="1">3.4.25.2</ecNumber>
    </recommendedName>
</protein>
<feature type="chain" id="PRO_1000012604" description="ATP-dependent protease subunit HslV">
    <location>
        <begin position="1"/>
        <end position="181"/>
    </location>
</feature>
<feature type="active site" evidence="1">
    <location>
        <position position="6"/>
    </location>
</feature>
<feature type="binding site" evidence="1">
    <location>
        <position position="162"/>
    </location>
    <ligand>
        <name>Na(+)</name>
        <dbReference type="ChEBI" id="CHEBI:29101"/>
    </ligand>
</feature>
<feature type="binding site" evidence="1">
    <location>
        <position position="165"/>
    </location>
    <ligand>
        <name>Na(+)</name>
        <dbReference type="ChEBI" id="CHEBI:29101"/>
    </ligand>
</feature>
<feature type="binding site" evidence="1">
    <location>
        <position position="168"/>
    </location>
    <ligand>
        <name>Na(+)</name>
        <dbReference type="ChEBI" id="CHEBI:29101"/>
    </ligand>
</feature>
<proteinExistence type="inferred from homology"/>
<organism>
    <name type="scientific">Nitratidesulfovibrio vulgaris (strain DP4)</name>
    <name type="common">Desulfovibrio vulgaris</name>
    <dbReference type="NCBI Taxonomy" id="391774"/>
    <lineage>
        <taxon>Bacteria</taxon>
        <taxon>Pseudomonadati</taxon>
        <taxon>Thermodesulfobacteriota</taxon>
        <taxon>Desulfovibrionia</taxon>
        <taxon>Desulfovibrionales</taxon>
        <taxon>Desulfovibrionaceae</taxon>
        <taxon>Nitratidesulfovibrio</taxon>
    </lineage>
</organism>
<accession>A1VDQ7</accession>
<gene>
    <name evidence="1" type="primary">hslV</name>
    <name type="ordered locus">Dvul_1556</name>
</gene>
<comment type="function">
    <text evidence="1">Protease subunit of a proteasome-like degradation complex believed to be a general protein degrading machinery.</text>
</comment>
<comment type="catalytic activity">
    <reaction evidence="1">
        <text>ATP-dependent cleavage of peptide bonds with broad specificity.</text>
        <dbReference type="EC" id="3.4.25.2"/>
    </reaction>
</comment>
<comment type="activity regulation">
    <text evidence="1">Allosterically activated by HslU binding.</text>
</comment>
<comment type="subunit">
    <text evidence="1">A double ring-shaped homohexamer of HslV is capped on each side by a ring-shaped HslU homohexamer. The assembly of the HslU/HslV complex is dependent on binding of ATP.</text>
</comment>
<comment type="subcellular location">
    <subcellularLocation>
        <location evidence="1">Cytoplasm</location>
    </subcellularLocation>
</comment>
<comment type="similarity">
    <text evidence="1">Belongs to the peptidase T1B family. HslV subfamily.</text>
</comment>
<reference key="1">
    <citation type="journal article" date="2009" name="Environ. Microbiol.">
        <title>Contribution of mobile genetic elements to Desulfovibrio vulgaris genome plasticity.</title>
        <authorList>
            <person name="Walker C.B."/>
            <person name="Stolyar S."/>
            <person name="Chivian D."/>
            <person name="Pinel N."/>
            <person name="Gabster J.A."/>
            <person name="Dehal P.S."/>
            <person name="He Z."/>
            <person name="Yang Z.K."/>
            <person name="Yen H.C."/>
            <person name="Zhou J."/>
            <person name="Wall J.D."/>
            <person name="Hazen T.C."/>
            <person name="Arkin A.P."/>
            <person name="Stahl D.A."/>
        </authorList>
    </citation>
    <scope>NUCLEOTIDE SEQUENCE [LARGE SCALE GENOMIC DNA]</scope>
    <source>
        <strain>DP4</strain>
    </source>
</reference>
<name>HSLV_NITV4</name>
<sequence length="181" mass="19487">MELKGTTILAVRGAQGVTIAGDGQVTMGQSIVMKHSARKVRRLYNGRVVAGFAGSTADAFTLFEHFEAKLEEHRGNLVRAAVEMAKSWRKDKYLRRLEAMLLVADNEHILVLSGNGDVIEPDDGIAAIGSGGPYALAAARALARHTQLDAETIAREAMRIAGEICVFTNDHLTVESAETQA</sequence>
<keyword id="KW-0021">Allosteric enzyme</keyword>
<keyword id="KW-0963">Cytoplasm</keyword>
<keyword id="KW-0378">Hydrolase</keyword>
<keyword id="KW-0479">Metal-binding</keyword>
<keyword id="KW-0645">Protease</keyword>
<keyword id="KW-0915">Sodium</keyword>
<keyword id="KW-0888">Threonine protease</keyword>